<protein>
    <recommendedName>
        <fullName>Protein LURP-one-related 9</fullName>
    </recommendedName>
</protein>
<sequence>MVSVVGEMFCNPYTTELVVRRRRESLKRERYDVFDLSNNLIFTVDGGIWNIRRKRVLRDAAGIPLLSMRTKGLVPMRYNWEVYKGDSTESDNLLFSAREPNLLSFKTSLDVTLPPDQSSTDISSVEPDFQTFGRYIGSSFKLFEPIHNTLLAEVVHDFTWGGLIKGSYSFKVRVNPYVDFAFVVALLVITDDTSNLR</sequence>
<proteinExistence type="inferred from homology"/>
<gene>
    <name type="ordered locus">At3g10986</name>
    <name type="ORF">F9F8</name>
</gene>
<organism>
    <name type="scientific">Arabidopsis thaliana</name>
    <name type="common">Mouse-ear cress</name>
    <dbReference type="NCBI Taxonomy" id="3702"/>
    <lineage>
        <taxon>Eukaryota</taxon>
        <taxon>Viridiplantae</taxon>
        <taxon>Streptophyta</taxon>
        <taxon>Embryophyta</taxon>
        <taxon>Tracheophyta</taxon>
        <taxon>Spermatophyta</taxon>
        <taxon>Magnoliopsida</taxon>
        <taxon>eudicotyledons</taxon>
        <taxon>Gunneridae</taxon>
        <taxon>Pentapetalae</taxon>
        <taxon>rosids</taxon>
        <taxon>malvids</taxon>
        <taxon>Brassicales</taxon>
        <taxon>Brassicaceae</taxon>
        <taxon>Camelineae</taxon>
        <taxon>Arabidopsis</taxon>
    </lineage>
</organism>
<accession>B3H5L1</accession>
<feature type="chain" id="PRO_0000399241" description="Protein LURP-one-related 9">
    <location>
        <begin position="1"/>
        <end position="197"/>
    </location>
</feature>
<evidence type="ECO:0000250" key="1"/>
<evidence type="ECO:0000305" key="2"/>
<comment type="function">
    <text evidence="1">Might be related to the phospholipid scramblase and tubby-like superfamily of membrane tethered transcription factors.</text>
</comment>
<comment type="similarity">
    <text evidence="2">Belongs to the LOR family.</text>
</comment>
<keyword id="KW-1185">Reference proteome</keyword>
<name>LOR9_ARATH</name>
<dbReference type="EMBL" id="AC009991">
    <property type="status" value="NOT_ANNOTATED_CDS"/>
    <property type="molecule type" value="Genomic_DNA"/>
</dbReference>
<dbReference type="EMBL" id="CP002686">
    <property type="protein sequence ID" value="AEE74989.1"/>
    <property type="molecule type" value="Genomic_DNA"/>
</dbReference>
<dbReference type="RefSeq" id="NP_001118614.1">
    <property type="nucleotide sequence ID" value="NM_001125142.2"/>
</dbReference>
<dbReference type="SMR" id="B3H5L1"/>
<dbReference type="STRING" id="3702.B3H5L1"/>
<dbReference type="PaxDb" id="3702-AT3G10986.1"/>
<dbReference type="EnsemblPlants" id="AT3G10986.1">
    <property type="protein sequence ID" value="AT3G10986.1"/>
    <property type="gene ID" value="AT3G10986"/>
</dbReference>
<dbReference type="GeneID" id="6240409"/>
<dbReference type="Gramene" id="AT3G10986.1">
    <property type="protein sequence ID" value="AT3G10986.1"/>
    <property type="gene ID" value="AT3G10986"/>
</dbReference>
<dbReference type="KEGG" id="ath:AT3G10986"/>
<dbReference type="Araport" id="AT3G10986"/>
<dbReference type="TAIR" id="AT3G10986"/>
<dbReference type="eggNOG" id="ENOG502RZMQ">
    <property type="taxonomic scope" value="Eukaryota"/>
</dbReference>
<dbReference type="HOGENOM" id="CLU_063146_5_1_1"/>
<dbReference type="InParanoid" id="B3H5L1"/>
<dbReference type="OMA" id="FQTYGRY"/>
<dbReference type="PhylomeDB" id="B3H5L1"/>
<dbReference type="PRO" id="PR:B3H5L1"/>
<dbReference type="Proteomes" id="UP000006548">
    <property type="component" value="Chromosome 3"/>
</dbReference>
<dbReference type="ExpressionAtlas" id="B3H5L1">
    <property type="expression patterns" value="baseline and differential"/>
</dbReference>
<dbReference type="Gene3D" id="2.40.160.200">
    <property type="entry name" value="LURP1-related"/>
    <property type="match status" value="1"/>
</dbReference>
<dbReference type="InterPro" id="IPR007612">
    <property type="entry name" value="LOR"/>
</dbReference>
<dbReference type="InterPro" id="IPR038595">
    <property type="entry name" value="LOR_sf"/>
</dbReference>
<dbReference type="InterPro" id="IPR025659">
    <property type="entry name" value="Tubby-like_C"/>
</dbReference>
<dbReference type="PANTHER" id="PTHR31087">
    <property type="match status" value="1"/>
</dbReference>
<dbReference type="PANTHER" id="PTHR31087:SF17">
    <property type="entry name" value="PROTEIN LURP-ONE-RELATED 14-RELATED"/>
    <property type="match status" value="1"/>
</dbReference>
<dbReference type="Pfam" id="PF04525">
    <property type="entry name" value="LOR"/>
    <property type="match status" value="1"/>
</dbReference>
<dbReference type="SUPFAM" id="SSF54518">
    <property type="entry name" value="Tubby C-terminal domain-like"/>
    <property type="match status" value="1"/>
</dbReference>
<reference key="1">
    <citation type="journal article" date="2000" name="Nature">
        <title>Sequence and analysis of chromosome 3 of the plant Arabidopsis thaliana.</title>
        <authorList>
            <person name="Salanoubat M."/>
            <person name="Lemcke K."/>
            <person name="Rieger M."/>
            <person name="Ansorge W."/>
            <person name="Unseld M."/>
            <person name="Fartmann B."/>
            <person name="Valle G."/>
            <person name="Bloecker H."/>
            <person name="Perez-Alonso M."/>
            <person name="Obermaier B."/>
            <person name="Delseny M."/>
            <person name="Boutry M."/>
            <person name="Grivell L.A."/>
            <person name="Mache R."/>
            <person name="Puigdomenech P."/>
            <person name="De Simone V."/>
            <person name="Choisne N."/>
            <person name="Artiguenave F."/>
            <person name="Robert C."/>
            <person name="Brottier P."/>
            <person name="Wincker P."/>
            <person name="Cattolico L."/>
            <person name="Weissenbach J."/>
            <person name="Saurin W."/>
            <person name="Quetier F."/>
            <person name="Schaefer M."/>
            <person name="Mueller-Auer S."/>
            <person name="Gabel C."/>
            <person name="Fuchs M."/>
            <person name="Benes V."/>
            <person name="Wurmbach E."/>
            <person name="Drzonek H."/>
            <person name="Erfle H."/>
            <person name="Jordan N."/>
            <person name="Bangert S."/>
            <person name="Wiedelmann R."/>
            <person name="Kranz H."/>
            <person name="Voss H."/>
            <person name="Holland R."/>
            <person name="Brandt P."/>
            <person name="Nyakatura G."/>
            <person name="Vezzi A."/>
            <person name="D'Angelo M."/>
            <person name="Pallavicini A."/>
            <person name="Toppo S."/>
            <person name="Simionati B."/>
            <person name="Conrad A."/>
            <person name="Hornischer K."/>
            <person name="Kauer G."/>
            <person name="Loehnert T.-H."/>
            <person name="Nordsiek G."/>
            <person name="Reichelt J."/>
            <person name="Scharfe M."/>
            <person name="Schoen O."/>
            <person name="Bargues M."/>
            <person name="Terol J."/>
            <person name="Climent J."/>
            <person name="Navarro P."/>
            <person name="Collado C."/>
            <person name="Perez-Perez A."/>
            <person name="Ottenwaelder B."/>
            <person name="Duchemin D."/>
            <person name="Cooke R."/>
            <person name="Laudie M."/>
            <person name="Berger-Llauro C."/>
            <person name="Purnelle B."/>
            <person name="Masuy D."/>
            <person name="de Haan M."/>
            <person name="Maarse A.C."/>
            <person name="Alcaraz J.-P."/>
            <person name="Cottet A."/>
            <person name="Casacuberta E."/>
            <person name="Monfort A."/>
            <person name="Argiriou A."/>
            <person name="Flores M."/>
            <person name="Liguori R."/>
            <person name="Vitale D."/>
            <person name="Mannhaupt G."/>
            <person name="Haase D."/>
            <person name="Schoof H."/>
            <person name="Rudd S."/>
            <person name="Zaccaria P."/>
            <person name="Mewes H.-W."/>
            <person name="Mayer K.F.X."/>
            <person name="Kaul S."/>
            <person name="Town C.D."/>
            <person name="Koo H.L."/>
            <person name="Tallon L.J."/>
            <person name="Jenkins J."/>
            <person name="Rooney T."/>
            <person name="Rizzo M."/>
            <person name="Walts A."/>
            <person name="Utterback T."/>
            <person name="Fujii C.Y."/>
            <person name="Shea T.P."/>
            <person name="Creasy T.H."/>
            <person name="Haas B."/>
            <person name="Maiti R."/>
            <person name="Wu D."/>
            <person name="Peterson J."/>
            <person name="Van Aken S."/>
            <person name="Pai G."/>
            <person name="Militscher J."/>
            <person name="Sellers P."/>
            <person name="Gill J.E."/>
            <person name="Feldblyum T.V."/>
            <person name="Preuss D."/>
            <person name="Lin X."/>
            <person name="Nierman W.C."/>
            <person name="Salzberg S.L."/>
            <person name="White O."/>
            <person name="Venter J.C."/>
            <person name="Fraser C.M."/>
            <person name="Kaneko T."/>
            <person name="Nakamura Y."/>
            <person name="Sato S."/>
            <person name="Kato T."/>
            <person name="Asamizu E."/>
            <person name="Sasamoto S."/>
            <person name="Kimura T."/>
            <person name="Idesawa K."/>
            <person name="Kawashima K."/>
            <person name="Kishida Y."/>
            <person name="Kiyokawa C."/>
            <person name="Kohara M."/>
            <person name="Matsumoto M."/>
            <person name="Matsuno A."/>
            <person name="Muraki A."/>
            <person name="Nakayama S."/>
            <person name="Nakazaki N."/>
            <person name="Shinpo S."/>
            <person name="Takeuchi C."/>
            <person name="Wada T."/>
            <person name="Watanabe A."/>
            <person name="Yamada M."/>
            <person name="Yasuda M."/>
            <person name="Tabata S."/>
        </authorList>
    </citation>
    <scope>NUCLEOTIDE SEQUENCE [LARGE SCALE GENOMIC DNA]</scope>
    <source>
        <strain>cv. Columbia</strain>
    </source>
</reference>
<reference key="2">
    <citation type="journal article" date="2017" name="Plant J.">
        <title>Araport11: a complete reannotation of the Arabidopsis thaliana reference genome.</title>
        <authorList>
            <person name="Cheng C.Y."/>
            <person name="Krishnakumar V."/>
            <person name="Chan A.P."/>
            <person name="Thibaud-Nissen F."/>
            <person name="Schobel S."/>
            <person name="Town C.D."/>
        </authorList>
    </citation>
    <scope>GENOME REANNOTATION</scope>
    <source>
        <strain>cv. Columbia</strain>
    </source>
</reference>